<name>DNLI_HAEIN</name>
<comment type="function">
    <text>Catalyzes efficient strand joining on a single nicked DNA.</text>
</comment>
<comment type="catalytic activity">
    <reaction>
        <text>ATP + (deoxyribonucleotide)n-3'-hydroxyl + 5'-phospho-(deoxyribonucleotide)m = (deoxyribonucleotide)n+m + AMP + diphosphate.</text>
        <dbReference type="EC" id="6.5.1.1"/>
    </reaction>
</comment>
<comment type="cofactor">
    <cofactor evidence="1">
        <name>a divalent metal cation</name>
        <dbReference type="ChEBI" id="CHEBI:60240"/>
    </cofactor>
</comment>
<comment type="similarity">
    <text evidence="3">Belongs to the ATP-dependent DNA ligase family.</text>
</comment>
<comment type="caution">
    <text evidence="4">Was originally proposed to code for two separate adjacent ORFs, HI_1182 and HI_1183.</text>
</comment>
<comment type="sequence caution" evidence="3">
    <conflict type="frameshift">
        <sequence resource="EMBL-CDS" id="AAC22836"/>
    </conflict>
</comment>
<comment type="sequence caution" evidence="3">
    <conflict type="frameshift">
        <sequence resource="EMBL-CDS" id="AAC22846"/>
    </conflict>
</comment>
<dbReference type="EC" id="6.5.1.1"/>
<dbReference type="EMBL" id="U17295">
    <property type="protein sequence ID" value="AAA95982.1"/>
    <property type="molecule type" value="Genomic_DNA"/>
</dbReference>
<dbReference type="EMBL" id="L42023">
    <property type="protein sequence ID" value="AAC22836.1"/>
    <property type="status" value="ALT_FRAME"/>
    <property type="molecule type" value="Genomic_DNA"/>
</dbReference>
<dbReference type="EMBL" id="L42023">
    <property type="protein sequence ID" value="AAC22846.1"/>
    <property type="status" value="ALT_FRAME"/>
    <property type="molecule type" value="Genomic_DNA"/>
</dbReference>
<dbReference type="PIR" id="D64021">
    <property type="entry name" value="D64021"/>
</dbReference>
<dbReference type="PIR" id="E64021">
    <property type="entry name" value="E64021"/>
</dbReference>
<dbReference type="SMR" id="P44121"/>
<dbReference type="STRING" id="71421.HI_1182"/>
<dbReference type="EnsemblBacteria" id="AAC22836">
    <property type="protein sequence ID" value="AAC22836"/>
    <property type="gene ID" value="HI_1182"/>
</dbReference>
<dbReference type="EnsemblBacteria" id="AAC22846">
    <property type="protein sequence ID" value="AAC22846"/>
    <property type="gene ID" value="HI_1183"/>
</dbReference>
<dbReference type="KEGG" id="hin:HI_1182"/>
<dbReference type="KEGG" id="hin:HI_1183"/>
<dbReference type="eggNOG" id="COG1793">
    <property type="taxonomic scope" value="Bacteria"/>
</dbReference>
<dbReference type="HOGENOM" id="CLU_1459372_0_0_6"/>
<dbReference type="Proteomes" id="UP000000579">
    <property type="component" value="Chromosome"/>
</dbReference>
<dbReference type="GO" id="GO:0005524">
    <property type="term" value="F:ATP binding"/>
    <property type="evidence" value="ECO:0007669"/>
    <property type="project" value="UniProtKB-KW"/>
</dbReference>
<dbReference type="GO" id="GO:0003910">
    <property type="term" value="F:DNA ligase (ATP) activity"/>
    <property type="evidence" value="ECO:0007669"/>
    <property type="project" value="UniProtKB-EC"/>
</dbReference>
<dbReference type="GO" id="GO:0003911">
    <property type="term" value="F:DNA ligase (NAD+) activity"/>
    <property type="evidence" value="ECO:0000318"/>
    <property type="project" value="GO_Central"/>
</dbReference>
<dbReference type="GO" id="GO:0046872">
    <property type="term" value="F:metal ion binding"/>
    <property type="evidence" value="ECO:0007669"/>
    <property type="project" value="UniProtKB-KW"/>
</dbReference>
<dbReference type="GO" id="GO:0006310">
    <property type="term" value="P:DNA recombination"/>
    <property type="evidence" value="ECO:0007669"/>
    <property type="project" value="UniProtKB-KW"/>
</dbReference>
<dbReference type="GO" id="GO:0006281">
    <property type="term" value="P:DNA repair"/>
    <property type="evidence" value="ECO:0007669"/>
    <property type="project" value="UniProtKB-KW"/>
</dbReference>
<dbReference type="GO" id="GO:0006260">
    <property type="term" value="P:DNA replication"/>
    <property type="evidence" value="ECO:0007669"/>
    <property type="project" value="UniProtKB-KW"/>
</dbReference>
<dbReference type="CDD" id="cd07896">
    <property type="entry name" value="Adenylation_kDNA_ligase_like"/>
    <property type="match status" value="1"/>
</dbReference>
<dbReference type="CDD" id="cd08041">
    <property type="entry name" value="OBF_kDNA_ligase_like"/>
    <property type="match status" value="1"/>
</dbReference>
<dbReference type="Gene3D" id="3.30.1490.70">
    <property type="match status" value="1"/>
</dbReference>
<dbReference type="Gene3D" id="3.30.470.30">
    <property type="entry name" value="DNA ligase/mRNA capping enzyme"/>
    <property type="match status" value="1"/>
</dbReference>
<dbReference type="Gene3D" id="2.40.50.140">
    <property type="entry name" value="Nucleic acid-binding proteins"/>
    <property type="match status" value="1"/>
</dbReference>
<dbReference type="InterPro" id="IPR012310">
    <property type="entry name" value="DNA_ligase_ATP-dep_cent"/>
</dbReference>
<dbReference type="InterPro" id="IPR016059">
    <property type="entry name" value="DNA_ligase_ATP-dep_CS"/>
</dbReference>
<dbReference type="InterPro" id="IPR029319">
    <property type="entry name" value="DNA_ligase_OB"/>
</dbReference>
<dbReference type="InterPro" id="IPR012340">
    <property type="entry name" value="NA-bd_OB-fold"/>
</dbReference>
<dbReference type="InterPro" id="IPR050326">
    <property type="entry name" value="NAD_dep_DNA_ligaseB"/>
</dbReference>
<dbReference type="NCBIfam" id="NF006592">
    <property type="entry name" value="PRK09125.1"/>
    <property type="match status" value="1"/>
</dbReference>
<dbReference type="PANTHER" id="PTHR47810">
    <property type="entry name" value="DNA LIGASE"/>
    <property type="match status" value="1"/>
</dbReference>
<dbReference type="PANTHER" id="PTHR47810:SF1">
    <property type="entry name" value="DNA LIGASE B"/>
    <property type="match status" value="1"/>
</dbReference>
<dbReference type="Pfam" id="PF01068">
    <property type="entry name" value="DNA_ligase_A_M"/>
    <property type="match status" value="1"/>
</dbReference>
<dbReference type="Pfam" id="PF14743">
    <property type="entry name" value="DNA_ligase_OB_2"/>
    <property type="match status" value="1"/>
</dbReference>
<dbReference type="SUPFAM" id="SSF56091">
    <property type="entry name" value="DNA ligase/mRNA capping enzyme, catalytic domain"/>
    <property type="match status" value="1"/>
</dbReference>
<dbReference type="SUPFAM" id="SSF50249">
    <property type="entry name" value="Nucleic acid-binding proteins"/>
    <property type="match status" value="1"/>
</dbReference>
<dbReference type="PROSITE" id="PS00333">
    <property type="entry name" value="DNA_LIGASE_A2"/>
    <property type="match status" value="1"/>
</dbReference>
<dbReference type="PROSITE" id="PS50160">
    <property type="entry name" value="DNA_LIGASE_A3"/>
    <property type="match status" value="1"/>
</dbReference>
<organism>
    <name type="scientific">Haemophilus influenzae (strain ATCC 51907 / DSM 11121 / KW20 / Rd)</name>
    <dbReference type="NCBI Taxonomy" id="71421"/>
    <lineage>
        <taxon>Bacteria</taxon>
        <taxon>Pseudomonadati</taxon>
        <taxon>Pseudomonadota</taxon>
        <taxon>Gammaproteobacteria</taxon>
        <taxon>Pasteurellales</taxon>
        <taxon>Pasteurellaceae</taxon>
        <taxon>Haemophilus</taxon>
    </lineage>
</organism>
<sequence length="268" mass="30896">MKFYRTLLLFFASSFAFANSDLMLLHTYNNQPIEGWVMSEKLDGVRGYWNGKQLLTRQGQRLSPPAYFIKDFPPFAIDGELFSERNHFEEISTITKSFKGDGWEKLKLYVFDVPDAEGNLFERLAKLKAHLLEHPTTYIEIIEQIPVKDKTHLYQFLAQVENLQGEGVVVRNPNAPYERKRSSQILKLKTARGEECTVIAHHKGKGQFENVMGALTCKNHRGEFKIGSGFNLNERENPPPIGSVITYKYRGITNSGKPRFATYWREKK</sequence>
<gene>
    <name type="primary">ligA</name>
    <name type="ordered locus">HI_1182/HI_1183</name>
</gene>
<feature type="chain" id="PRO_0000059625" description="DNA ligase">
    <location>
        <begin position="1"/>
        <end position="268"/>
    </location>
</feature>
<feature type="active site" description="N6-AMP-lysine intermediate" evidence="2">
    <location>
        <position position="41"/>
    </location>
</feature>
<feature type="binding site" evidence="2">
    <location>
        <position position="111"/>
    </location>
    <ligand>
        <name>ATP</name>
        <dbReference type="ChEBI" id="CHEBI:30616"/>
    </ligand>
</feature>
<feature type="binding site" evidence="2">
    <location>
        <position position="181"/>
    </location>
    <ligand>
        <name>ATP</name>
        <dbReference type="ChEBI" id="CHEBI:30616"/>
    </ligand>
</feature>
<feature type="binding site" evidence="2">
    <location>
        <position position="187"/>
    </location>
    <ligand>
        <name>ATP</name>
        <dbReference type="ChEBI" id="CHEBI:30616"/>
    </ligand>
</feature>
<feature type="sequence conflict" description="In Ref. 2; AAC22836." evidence="3" ref="2">
    <original>T</original>
    <variation>S</variation>
    <location>
        <position position="93"/>
    </location>
</feature>
<keyword id="KW-0067">ATP-binding</keyword>
<keyword id="KW-0227">DNA damage</keyword>
<keyword id="KW-0233">DNA recombination</keyword>
<keyword id="KW-0234">DNA repair</keyword>
<keyword id="KW-0235">DNA replication</keyword>
<keyword id="KW-0436">Ligase</keyword>
<keyword id="KW-0479">Metal-binding</keyword>
<keyword id="KW-0547">Nucleotide-binding</keyword>
<keyword id="KW-1185">Reference proteome</keyword>
<reference key="1">
    <citation type="journal article" date="1996" name="J. Bacteriol.">
        <title>Altered lipopolysaccharide characteristic of the I69 phenotype in Haemophilus influenzae results from mutations in a novel gene, isn.</title>
        <authorList>
            <person name="Preston A."/>
            <person name="Maskell D."/>
            <person name="Johnson A."/>
            <person name="Moxon E.R."/>
        </authorList>
    </citation>
    <scope>NUCLEOTIDE SEQUENCE [GENOMIC DNA]</scope>
    <source>
        <strain>ATCC 51907 / DSM 11121 / KW20 / Rd</strain>
    </source>
</reference>
<reference key="2">
    <citation type="journal article" date="1995" name="Science">
        <title>Whole-genome random sequencing and assembly of Haemophilus influenzae Rd.</title>
        <authorList>
            <person name="Fleischmann R.D."/>
            <person name="Adams M.D."/>
            <person name="White O."/>
            <person name="Clayton R.A."/>
            <person name="Kirkness E.F."/>
            <person name="Kerlavage A.R."/>
            <person name="Bult C.J."/>
            <person name="Tomb J.-F."/>
            <person name="Dougherty B.A."/>
            <person name="Merrick J.M."/>
            <person name="McKenney K."/>
            <person name="Sutton G.G."/>
            <person name="FitzHugh W."/>
            <person name="Fields C.A."/>
            <person name="Gocayne J.D."/>
            <person name="Scott J.D."/>
            <person name="Shirley R."/>
            <person name="Liu L.-I."/>
            <person name="Glodek A."/>
            <person name="Kelley J.M."/>
            <person name="Weidman J.F."/>
            <person name="Phillips C.A."/>
            <person name="Spriggs T."/>
            <person name="Hedblom E."/>
            <person name="Cotton M.D."/>
            <person name="Utterback T.R."/>
            <person name="Hanna M.C."/>
            <person name="Nguyen D.T."/>
            <person name="Saudek D.M."/>
            <person name="Brandon R.C."/>
            <person name="Fine L.D."/>
            <person name="Fritchman J.L."/>
            <person name="Fuhrmann J.L."/>
            <person name="Geoghagen N.S.M."/>
            <person name="Gnehm C.L."/>
            <person name="McDonald L.A."/>
            <person name="Small K.V."/>
            <person name="Fraser C.M."/>
            <person name="Smith H.O."/>
            <person name="Venter J.C."/>
        </authorList>
    </citation>
    <scope>NUCLEOTIDE SEQUENCE [LARGE SCALE GENOMIC DNA]</scope>
    <source>
        <strain>ATCC 51907 / DSM 11121 / KW20 / Rd</strain>
    </source>
</reference>
<reference key="3">
    <citation type="journal article" date="1997" name="Nucleic Acids Res.">
        <title>Characterization of an ATP-dependent DNA ligase encoded by Haemophilus influenzae.</title>
        <authorList>
            <person name="Cheng C."/>
            <person name="Shuman S."/>
        </authorList>
    </citation>
    <scope>CHARACTERIZATION</scope>
</reference>
<accession>P44121</accession>
<accession>P44122</accession>
<accession>P71371</accession>
<accession>P71372</accession>
<evidence type="ECO:0000250" key="1"/>
<evidence type="ECO:0000255" key="2"/>
<evidence type="ECO:0000305" key="3"/>
<evidence type="ECO:0000305" key="4">
    <source>
    </source>
</evidence>
<proteinExistence type="evidence at protein level"/>
<protein>
    <recommendedName>
        <fullName>DNA ligase</fullName>
        <ecNumber>6.5.1.1</ecNumber>
    </recommendedName>
    <alternativeName>
        <fullName>Polydeoxyribonucleotide synthase [ATP]</fullName>
    </alternativeName>
</protein>